<gene>
    <name evidence="1" type="primary">rhaM</name>
    <name type="ordered locus">YpsIP31758_3759</name>
</gene>
<protein>
    <recommendedName>
        <fullName evidence="1">L-rhamnose mutarotase</fullName>
        <ecNumber evidence="1">5.1.3.32</ecNumber>
    </recommendedName>
    <alternativeName>
        <fullName evidence="1">Rhamnose 1-epimerase</fullName>
    </alternativeName>
    <alternativeName>
        <fullName evidence="1">Type-3 mutarotase</fullName>
    </alternativeName>
</protein>
<proteinExistence type="inferred from homology"/>
<comment type="function">
    <text evidence="1">Involved in the anomeric conversion of L-rhamnose.</text>
</comment>
<comment type="catalytic activity">
    <reaction evidence="1">
        <text>alpha-L-rhamnose = beta-L-rhamnose</text>
        <dbReference type="Rhea" id="RHEA:25584"/>
        <dbReference type="ChEBI" id="CHEBI:27586"/>
        <dbReference type="ChEBI" id="CHEBI:27907"/>
        <dbReference type="EC" id="5.1.3.32"/>
    </reaction>
</comment>
<comment type="pathway">
    <text evidence="1">Carbohydrate metabolism; L-rhamnose metabolism.</text>
</comment>
<comment type="subunit">
    <text evidence="1">Homodimer.</text>
</comment>
<comment type="subcellular location">
    <subcellularLocation>
        <location evidence="1">Cytoplasm</location>
    </subcellularLocation>
</comment>
<comment type="similarity">
    <text evidence="1">Belongs to the rhamnose mutarotase family.</text>
</comment>
<feature type="chain" id="PRO_0000344618" description="L-rhamnose mutarotase">
    <location>
        <begin position="1"/>
        <end position="104"/>
    </location>
</feature>
<feature type="active site" description="Proton donor" evidence="1">
    <location>
        <position position="22"/>
    </location>
</feature>
<feature type="binding site" evidence="1">
    <location>
        <position position="18"/>
    </location>
    <ligand>
        <name>substrate</name>
    </ligand>
</feature>
<feature type="binding site" evidence="1">
    <location>
        <position position="41"/>
    </location>
    <ligand>
        <name>substrate</name>
    </ligand>
</feature>
<feature type="binding site" evidence="1">
    <location>
        <begin position="76"/>
        <end position="77"/>
    </location>
    <ligand>
        <name>substrate</name>
    </ligand>
</feature>
<evidence type="ECO:0000255" key="1">
    <source>
        <dbReference type="HAMAP-Rule" id="MF_01663"/>
    </source>
</evidence>
<dbReference type="EC" id="5.1.3.32" evidence="1"/>
<dbReference type="EMBL" id="CP000720">
    <property type="protein sequence ID" value="ABS48519.1"/>
    <property type="molecule type" value="Genomic_DNA"/>
</dbReference>
<dbReference type="RefSeq" id="WP_002209101.1">
    <property type="nucleotide sequence ID" value="NC_009708.1"/>
</dbReference>
<dbReference type="SMR" id="A7FN85"/>
<dbReference type="GeneID" id="57974279"/>
<dbReference type="KEGG" id="ypi:YpsIP31758_3759"/>
<dbReference type="HOGENOM" id="CLU_100689_2_0_6"/>
<dbReference type="UniPathway" id="UPA00125"/>
<dbReference type="Proteomes" id="UP000002412">
    <property type="component" value="Chromosome"/>
</dbReference>
<dbReference type="GO" id="GO:0005737">
    <property type="term" value="C:cytoplasm"/>
    <property type="evidence" value="ECO:0007669"/>
    <property type="project" value="UniProtKB-SubCell"/>
</dbReference>
<dbReference type="GO" id="GO:0062192">
    <property type="term" value="F:L-rhamnose mutarotase activity"/>
    <property type="evidence" value="ECO:0007669"/>
    <property type="project" value="UniProtKB-EC"/>
</dbReference>
<dbReference type="GO" id="GO:0019301">
    <property type="term" value="P:rhamnose catabolic process"/>
    <property type="evidence" value="ECO:0007669"/>
    <property type="project" value="TreeGrafter"/>
</dbReference>
<dbReference type="Gene3D" id="3.30.70.100">
    <property type="match status" value="1"/>
</dbReference>
<dbReference type="HAMAP" id="MF_01663">
    <property type="entry name" value="L_rham_rotase"/>
    <property type="match status" value="1"/>
</dbReference>
<dbReference type="InterPro" id="IPR011008">
    <property type="entry name" value="Dimeric_a/b-barrel"/>
</dbReference>
<dbReference type="InterPro" id="IPR013448">
    <property type="entry name" value="L-rhamnose_mutarotase"/>
</dbReference>
<dbReference type="InterPro" id="IPR008000">
    <property type="entry name" value="Rham/fucose_mutarotase"/>
</dbReference>
<dbReference type="NCBIfam" id="TIGR02625">
    <property type="entry name" value="YiiL_rotase"/>
    <property type="match status" value="1"/>
</dbReference>
<dbReference type="PANTHER" id="PTHR34389">
    <property type="entry name" value="L-RHAMNOSE MUTAROTASE"/>
    <property type="match status" value="1"/>
</dbReference>
<dbReference type="PANTHER" id="PTHR34389:SF2">
    <property type="entry name" value="L-RHAMNOSE MUTAROTASE"/>
    <property type="match status" value="1"/>
</dbReference>
<dbReference type="Pfam" id="PF05336">
    <property type="entry name" value="rhaM"/>
    <property type="match status" value="1"/>
</dbReference>
<dbReference type="SUPFAM" id="SSF54909">
    <property type="entry name" value="Dimeric alpha+beta barrel"/>
    <property type="match status" value="1"/>
</dbReference>
<reference key="1">
    <citation type="journal article" date="2007" name="PLoS Genet.">
        <title>The complete genome sequence of Yersinia pseudotuberculosis IP31758, the causative agent of Far East scarlet-like fever.</title>
        <authorList>
            <person name="Eppinger M."/>
            <person name="Rosovitz M.J."/>
            <person name="Fricke W.F."/>
            <person name="Rasko D.A."/>
            <person name="Kokorina G."/>
            <person name="Fayolle C."/>
            <person name="Lindler L.E."/>
            <person name="Carniel E."/>
            <person name="Ravel J."/>
        </authorList>
    </citation>
    <scope>NUCLEOTIDE SEQUENCE [LARGE SCALE GENOMIC DNA]</scope>
    <source>
        <strain>IP 31758</strain>
    </source>
</reference>
<accession>A7FN85</accession>
<keyword id="KW-0119">Carbohydrate metabolism</keyword>
<keyword id="KW-0963">Cytoplasm</keyword>
<keyword id="KW-0413">Isomerase</keyword>
<keyword id="KW-0684">Rhamnose metabolism</keyword>
<sequence length="104" mass="12198">MIRKAFVMAVNPDAHAEYQRRHTPIWPELESVLKAHGAHHYSIFLDETRNLLFGVVEIESEERWNAVAQTAECQRWWQHMADVMPSHPDNSPVSQALREVFYLE</sequence>
<organism>
    <name type="scientific">Yersinia pseudotuberculosis serotype O:1b (strain IP 31758)</name>
    <dbReference type="NCBI Taxonomy" id="349747"/>
    <lineage>
        <taxon>Bacteria</taxon>
        <taxon>Pseudomonadati</taxon>
        <taxon>Pseudomonadota</taxon>
        <taxon>Gammaproteobacteria</taxon>
        <taxon>Enterobacterales</taxon>
        <taxon>Yersiniaceae</taxon>
        <taxon>Yersinia</taxon>
    </lineage>
</organism>
<name>RHAM_YERP3</name>